<evidence type="ECO:0000255" key="1">
    <source>
        <dbReference type="HAMAP-Rule" id="MF_01445"/>
    </source>
</evidence>
<name>TSAD_MYCLE</name>
<reference key="1">
    <citation type="submission" date="1994-03" db="EMBL/GenBank/DDBJ databases">
        <authorList>
            <person name="Smith D.R."/>
            <person name="Robison K."/>
        </authorList>
    </citation>
    <scope>NUCLEOTIDE SEQUENCE [GENOMIC DNA]</scope>
</reference>
<reference key="2">
    <citation type="journal article" date="2001" name="Nature">
        <title>Massive gene decay in the leprosy bacillus.</title>
        <authorList>
            <person name="Cole S.T."/>
            <person name="Eiglmeier K."/>
            <person name="Parkhill J."/>
            <person name="James K.D."/>
            <person name="Thomson N.R."/>
            <person name="Wheeler P.R."/>
            <person name="Honore N."/>
            <person name="Garnier T."/>
            <person name="Churcher C.M."/>
            <person name="Harris D.E."/>
            <person name="Mungall K.L."/>
            <person name="Basham D."/>
            <person name="Brown D."/>
            <person name="Chillingworth T."/>
            <person name="Connor R."/>
            <person name="Davies R.M."/>
            <person name="Devlin K."/>
            <person name="Duthoy S."/>
            <person name="Feltwell T."/>
            <person name="Fraser A."/>
            <person name="Hamlin N."/>
            <person name="Holroyd S."/>
            <person name="Hornsby T."/>
            <person name="Jagels K."/>
            <person name="Lacroix C."/>
            <person name="Maclean J."/>
            <person name="Moule S."/>
            <person name="Murphy L.D."/>
            <person name="Oliver K."/>
            <person name="Quail M.A."/>
            <person name="Rajandream M.A."/>
            <person name="Rutherford K.M."/>
            <person name="Rutter S."/>
            <person name="Seeger K."/>
            <person name="Simon S."/>
            <person name="Simmonds M."/>
            <person name="Skelton J."/>
            <person name="Squares R."/>
            <person name="Squares S."/>
            <person name="Stevens K."/>
            <person name="Taylor K."/>
            <person name="Whitehead S."/>
            <person name="Woodward J.R."/>
            <person name="Barrell B.G."/>
        </authorList>
    </citation>
    <scope>NUCLEOTIDE SEQUENCE [LARGE SCALE GENOMIC DNA]</scope>
    <source>
        <strain>TN</strain>
    </source>
</reference>
<reference key="3">
    <citation type="journal article" date="1992" name="Mol. Microbiol.">
        <title>Mycobacteria contain two groEL genes: the second Mycobacterium leprae groEL gene is arranged in an operon with groES.</title>
        <authorList>
            <person name="de Wit T.F.R."/>
            <person name="Bekelie S."/>
            <person name="Osland A."/>
            <person name="Miko T.L."/>
            <person name="Hermans P.W.M."/>
            <person name="van Soolingen D."/>
            <person name="Drijfhout J."/>
            <person name="Schoeningh R."/>
            <person name="Janson A.A.M."/>
            <person name="Thole J.E.R."/>
        </authorList>
    </citation>
    <scope>NUCLEOTIDE SEQUENCE [GENOMIC DNA] OF 286-351</scope>
</reference>
<gene>
    <name evidence="1" type="primary">tsaD</name>
    <name type="synonym">gcp</name>
    <name type="ordered locus">ML0379</name>
    <name type="ORF">B1620_C3_226</name>
    <name type="ORF">B229_C3_246</name>
    <name type="ORF">u1620c</name>
    <name type="ORF">u229e</name>
</gene>
<keyword id="KW-0012">Acyltransferase</keyword>
<keyword id="KW-0963">Cytoplasm</keyword>
<keyword id="KW-0408">Iron</keyword>
<keyword id="KW-0479">Metal-binding</keyword>
<keyword id="KW-1185">Reference proteome</keyword>
<keyword id="KW-0808">Transferase</keyword>
<keyword id="KW-0819">tRNA processing</keyword>
<sequence>MTISAVPGTIILAIETSCDETGVGIACLDDYGTVTLLADEVASSVDEQARFGGVVPEIASRAHLEALGPTIRCALAAAGLTGSAKPDVVAATIGPGLAGALLVGVAAAKAYSAAWGVPFYAVNHLGGHLAADVYEHGPLPECVALLVSGGHTHLLQVRSLGAPIVELGSTVDDAAGEAYDKVARLLGLGYPGGKVLDDLARTGDRDAIVFPRGMTGPADDLNAFSFSGLKTAVARYVESHPDALPADVAAGFQEAVADVLTMKAVRAATGLGVSTLLIVGGVAANSRLRELAAQRCAAAGLMLRIPGPRFCTDNGAMIAAFAAHLLAAAAPPSPLDVPSDPGLPVVKRQIN</sequence>
<dbReference type="EC" id="2.3.1.234" evidence="1"/>
<dbReference type="EMBL" id="U00020">
    <property type="protein sequence ID" value="AAA17310.1"/>
    <property type="status" value="ALT_SEQ"/>
    <property type="molecule type" value="Genomic_DNA"/>
</dbReference>
<dbReference type="EMBL" id="AL583918">
    <property type="protein sequence ID" value="CAC29887.1"/>
    <property type="molecule type" value="Genomic_DNA"/>
</dbReference>
<dbReference type="EMBL" id="U00015">
    <property type="protein sequence ID" value="AAC43226.1"/>
    <property type="molecule type" value="Genomic_DNA"/>
</dbReference>
<dbReference type="PIR" id="S72817">
    <property type="entry name" value="S72817"/>
</dbReference>
<dbReference type="PIR" id="S72996">
    <property type="entry name" value="S72996"/>
</dbReference>
<dbReference type="RefSeq" id="NP_301371.1">
    <property type="nucleotide sequence ID" value="NC_002677.1"/>
</dbReference>
<dbReference type="RefSeq" id="WP_010907695.1">
    <property type="nucleotide sequence ID" value="NC_002677.1"/>
</dbReference>
<dbReference type="SMR" id="P37969"/>
<dbReference type="STRING" id="272631.gene:17574198"/>
<dbReference type="KEGG" id="mle:ML0379"/>
<dbReference type="PATRIC" id="fig|272631.5.peg.641"/>
<dbReference type="Leproma" id="ML0379"/>
<dbReference type="eggNOG" id="COG0533">
    <property type="taxonomic scope" value="Bacteria"/>
</dbReference>
<dbReference type="HOGENOM" id="CLU_023208_0_2_11"/>
<dbReference type="OrthoDB" id="9806197at2"/>
<dbReference type="Proteomes" id="UP000000806">
    <property type="component" value="Chromosome"/>
</dbReference>
<dbReference type="GO" id="GO:0005737">
    <property type="term" value="C:cytoplasm"/>
    <property type="evidence" value="ECO:0007669"/>
    <property type="project" value="UniProtKB-SubCell"/>
</dbReference>
<dbReference type="GO" id="GO:0005506">
    <property type="term" value="F:iron ion binding"/>
    <property type="evidence" value="ECO:0007669"/>
    <property type="project" value="UniProtKB-UniRule"/>
</dbReference>
<dbReference type="GO" id="GO:0061711">
    <property type="term" value="F:N(6)-L-threonylcarbamoyladenine synthase activity"/>
    <property type="evidence" value="ECO:0007669"/>
    <property type="project" value="UniProtKB-EC"/>
</dbReference>
<dbReference type="GO" id="GO:0002949">
    <property type="term" value="P:tRNA threonylcarbamoyladenosine modification"/>
    <property type="evidence" value="ECO:0007669"/>
    <property type="project" value="UniProtKB-UniRule"/>
</dbReference>
<dbReference type="FunFam" id="3.30.420.40:FF:000012">
    <property type="entry name" value="tRNA N6-adenosine threonylcarbamoyltransferase"/>
    <property type="match status" value="1"/>
</dbReference>
<dbReference type="FunFam" id="3.30.420.40:FF:000040">
    <property type="entry name" value="tRNA N6-adenosine threonylcarbamoyltransferase"/>
    <property type="match status" value="1"/>
</dbReference>
<dbReference type="Gene3D" id="3.30.420.40">
    <property type="match status" value="2"/>
</dbReference>
<dbReference type="HAMAP" id="MF_01445">
    <property type="entry name" value="TsaD"/>
    <property type="match status" value="1"/>
</dbReference>
<dbReference type="InterPro" id="IPR043129">
    <property type="entry name" value="ATPase_NBD"/>
</dbReference>
<dbReference type="InterPro" id="IPR000905">
    <property type="entry name" value="Gcp-like_dom"/>
</dbReference>
<dbReference type="InterPro" id="IPR017861">
    <property type="entry name" value="KAE1/TsaD"/>
</dbReference>
<dbReference type="InterPro" id="IPR017860">
    <property type="entry name" value="Peptidase_M22_CS"/>
</dbReference>
<dbReference type="InterPro" id="IPR022450">
    <property type="entry name" value="TsaD"/>
</dbReference>
<dbReference type="NCBIfam" id="TIGR00329">
    <property type="entry name" value="gcp_kae1"/>
    <property type="match status" value="1"/>
</dbReference>
<dbReference type="NCBIfam" id="TIGR03723">
    <property type="entry name" value="T6A_TsaD_YgjD"/>
    <property type="match status" value="1"/>
</dbReference>
<dbReference type="PANTHER" id="PTHR11735">
    <property type="entry name" value="TRNA N6-ADENOSINE THREONYLCARBAMOYLTRANSFERASE"/>
    <property type="match status" value="1"/>
</dbReference>
<dbReference type="PANTHER" id="PTHR11735:SF6">
    <property type="entry name" value="TRNA N6-ADENOSINE THREONYLCARBAMOYLTRANSFERASE, MITOCHONDRIAL"/>
    <property type="match status" value="1"/>
</dbReference>
<dbReference type="Pfam" id="PF00814">
    <property type="entry name" value="TsaD"/>
    <property type="match status" value="1"/>
</dbReference>
<dbReference type="PRINTS" id="PR00789">
    <property type="entry name" value="OSIALOPTASE"/>
</dbReference>
<dbReference type="SUPFAM" id="SSF53067">
    <property type="entry name" value="Actin-like ATPase domain"/>
    <property type="match status" value="2"/>
</dbReference>
<dbReference type="PROSITE" id="PS01016">
    <property type="entry name" value="GLYCOPROTEASE"/>
    <property type="match status" value="1"/>
</dbReference>
<accession>P37969</accession>
<accession>Q49725</accession>
<organism>
    <name type="scientific">Mycobacterium leprae (strain TN)</name>
    <dbReference type="NCBI Taxonomy" id="272631"/>
    <lineage>
        <taxon>Bacteria</taxon>
        <taxon>Bacillati</taxon>
        <taxon>Actinomycetota</taxon>
        <taxon>Actinomycetes</taxon>
        <taxon>Mycobacteriales</taxon>
        <taxon>Mycobacteriaceae</taxon>
        <taxon>Mycobacterium</taxon>
    </lineage>
</organism>
<comment type="function">
    <text evidence="1">Required for the formation of a threonylcarbamoyl group on adenosine at position 37 (t(6)A37) in tRNAs that read codons beginning with adenine. Is involved in the transfer of the threonylcarbamoyl moiety of threonylcarbamoyl-AMP (TC-AMP) to the N6 group of A37, together with TsaE and TsaB. TsaD likely plays a direct catalytic role in this reaction.</text>
</comment>
<comment type="catalytic activity">
    <reaction evidence="1">
        <text>L-threonylcarbamoyladenylate + adenosine(37) in tRNA = N(6)-L-threonylcarbamoyladenosine(37) in tRNA + AMP + H(+)</text>
        <dbReference type="Rhea" id="RHEA:37059"/>
        <dbReference type="Rhea" id="RHEA-COMP:10162"/>
        <dbReference type="Rhea" id="RHEA-COMP:10163"/>
        <dbReference type="ChEBI" id="CHEBI:15378"/>
        <dbReference type="ChEBI" id="CHEBI:73682"/>
        <dbReference type="ChEBI" id="CHEBI:74411"/>
        <dbReference type="ChEBI" id="CHEBI:74418"/>
        <dbReference type="ChEBI" id="CHEBI:456215"/>
        <dbReference type="EC" id="2.3.1.234"/>
    </reaction>
</comment>
<comment type="cofactor">
    <cofactor evidence="1">
        <name>Fe(2+)</name>
        <dbReference type="ChEBI" id="CHEBI:29033"/>
    </cofactor>
    <text evidence="1">Binds 1 Fe(2+) ion per subunit.</text>
</comment>
<comment type="subcellular location">
    <subcellularLocation>
        <location evidence="1">Cytoplasm</location>
    </subcellularLocation>
</comment>
<comment type="similarity">
    <text evidence="1">Belongs to the KAE1 / TsaD family.</text>
</comment>
<feature type="chain" id="PRO_0000096969" description="tRNA N6-adenosine threonylcarbamoyltransferase">
    <location>
        <begin position="1"/>
        <end position="351"/>
    </location>
</feature>
<feature type="binding site" evidence="1">
    <location>
        <position position="124"/>
    </location>
    <ligand>
        <name>Fe cation</name>
        <dbReference type="ChEBI" id="CHEBI:24875"/>
    </ligand>
</feature>
<feature type="binding site" evidence="1">
    <location>
        <position position="128"/>
    </location>
    <ligand>
        <name>Fe cation</name>
        <dbReference type="ChEBI" id="CHEBI:24875"/>
    </ligand>
</feature>
<feature type="binding site" evidence="1">
    <location>
        <begin position="146"/>
        <end position="150"/>
    </location>
    <ligand>
        <name>substrate</name>
    </ligand>
</feature>
<feature type="binding site" evidence="1">
    <location>
        <position position="180"/>
    </location>
    <ligand>
        <name>substrate</name>
    </ligand>
</feature>
<feature type="binding site" evidence="1">
    <location>
        <position position="193"/>
    </location>
    <ligand>
        <name>substrate</name>
    </ligand>
</feature>
<feature type="binding site" evidence="1">
    <location>
        <position position="197"/>
    </location>
    <ligand>
        <name>substrate</name>
    </ligand>
</feature>
<feature type="binding site" evidence="1">
    <location>
        <position position="285"/>
    </location>
    <ligand>
        <name>substrate</name>
    </ligand>
</feature>
<feature type="binding site" evidence="1">
    <location>
        <position position="313"/>
    </location>
    <ligand>
        <name>Fe cation</name>
        <dbReference type="ChEBI" id="CHEBI:24875"/>
    </ligand>
</feature>
<protein>
    <recommendedName>
        <fullName evidence="1">tRNA N6-adenosine threonylcarbamoyltransferase</fullName>
        <ecNumber evidence="1">2.3.1.234</ecNumber>
    </recommendedName>
    <alternativeName>
        <fullName evidence="1">N6-L-threonylcarbamoyladenine synthase</fullName>
        <shortName evidence="1">t(6)A synthase</shortName>
    </alternativeName>
    <alternativeName>
        <fullName evidence="1">t(6)A37 threonylcarbamoyladenosine biosynthesis protein TsaD</fullName>
    </alternativeName>
    <alternativeName>
        <fullName evidence="1">tRNA threonylcarbamoyladenosine biosynthesis protein TsaD</fullName>
    </alternativeName>
</protein>
<proteinExistence type="inferred from homology"/>